<organism>
    <name type="scientific">Arabidopsis thaliana</name>
    <name type="common">Mouse-ear cress</name>
    <dbReference type="NCBI Taxonomy" id="3702"/>
    <lineage>
        <taxon>Eukaryota</taxon>
        <taxon>Viridiplantae</taxon>
        <taxon>Streptophyta</taxon>
        <taxon>Embryophyta</taxon>
        <taxon>Tracheophyta</taxon>
        <taxon>Spermatophyta</taxon>
        <taxon>Magnoliopsida</taxon>
        <taxon>eudicotyledons</taxon>
        <taxon>Gunneridae</taxon>
        <taxon>Pentapetalae</taxon>
        <taxon>rosids</taxon>
        <taxon>malvids</taxon>
        <taxon>Brassicales</taxon>
        <taxon>Brassicaceae</taxon>
        <taxon>Camelineae</taxon>
        <taxon>Arabidopsis</taxon>
    </lineage>
</organism>
<proteinExistence type="evidence at transcript level"/>
<gene>
    <name type="primary">GCS2</name>
    <name type="ordered locus">At1g24320</name>
    <name type="ORF">F3I6.26</name>
</gene>
<keyword id="KW-0326">Glycosidase</keyword>
<keyword id="KW-0378">Hydrolase</keyword>
<keyword id="KW-1185">Reference proteome</keyword>
<comment type="pathway">
    <text>Glycan metabolism; N-glycan degradation.</text>
</comment>
<comment type="similarity">
    <text evidence="3">Belongs to the glycosyl hydrolase 63 family.</text>
</comment>
<comment type="sequence caution" evidence="3">
    <conflict type="erroneous gene model prediction">
        <sequence resource="EMBL-CDS" id="AAC00593"/>
    </conflict>
</comment>
<name>GCS2_ARATH</name>
<dbReference type="EC" id="3.2.1.-"/>
<dbReference type="EMBL" id="AC002396">
    <property type="protein sequence ID" value="AAC00593.1"/>
    <property type="status" value="ALT_SEQ"/>
    <property type="molecule type" value="Genomic_DNA"/>
</dbReference>
<dbReference type="EMBL" id="CP002684">
    <property type="protein sequence ID" value="AEE30516.1"/>
    <property type="molecule type" value="Genomic_DNA"/>
</dbReference>
<dbReference type="EMBL" id="BT006494">
    <property type="protein sequence ID" value="AAP21302.1"/>
    <property type="molecule type" value="mRNA"/>
</dbReference>
<dbReference type="EMBL" id="AK227426">
    <property type="protein sequence ID" value="BAE99430.1"/>
    <property type="molecule type" value="mRNA"/>
</dbReference>
<dbReference type="PIR" id="T00663">
    <property type="entry name" value="T00663"/>
</dbReference>
<dbReference type="RefSeq" id="NP_173842.2">
    <property type="nucleotide sequence ID" value="NM_102278.6"/>
</dbReference>
<dbReference type="SMR" id="Q84M89"/>
<dbReference type="FunCoup" id="Q84M89">
    <property type="interactions" value="3249"/>
</dbReference>
<dbReference type="STRING" id="3702.Q84M89"/>
<dbReference type="CAZy" id="GH63">
    <property type="family name" value="Glycoside Hydrolase Family 63"/>
</dbReference>
<dbReference type="PaxDb" id="3702-AT1G24320.1"/>
<dbReference type="ProteomicsDB" id="222024"/>
<dbReference type="EnsemblPlants" id="AT1G24320.1">
    <property type="protein sequence ID" value="AT1G24320.1"/>
    <property type="gene ID" value="AT1G24320"/>
</dbReference>
<dbReference type="GeneID" id="839048"/>
<dbReference type="Gramene" id="AT1G24320.1">
    <property type="protein sequence ID" value="AT1G24320.1"/>
    <property type="gene ID" value="AT1G24320"/>
</dbReference>
<dbReference type="KEGG" id="ath:AT1G24320"/>
<dbReference type="Araport" id="AT1G24320"/>
<dbReference type="TAIR" id="AT1G24320"/>
<dbReference type="eggNOG" id="KOG2161">
    <property type="taxonomic scope" value="Eukaryota"/>
</dbReference>
<dbReference type="HOGENOM" id="CLU_007380_1_0_1"/>
<dbReference type="InParanoid" id="Q84M89"/>
<dbReference type="OMA" id="IHLDLRC"/>
<dbReference type="PhylomeDB" id="Q84M89"/>
<dbReference type="BioCyc" id="ARA:AT1G24320-MONOMER"/>
<dbReference type="UniPathway" id="UPA00280"/>
<dbReference type="PRO" id="PR:Q84M89"/>
<dbReference type="Proteomes" id="UP000006548">
    <property type="component" value="Chromosome 1"/>
</dbReference>
<dbReference type="ExpressionAtlas" id="Q84M89">
    <property type="expression patterns" value="baseline and differential"/>
</dbReference>
<dbReference type="GO" id="GO:0004573">
    <property type="term" value="F:Glc3Man9GlcNAc2 oligosaccharide glucosidase activity"/>
    <property type="evidence" value="ECO:0007669"/>
    <property type="project" value="InterPro"/>
</dbReference>
<dbReference type="GO" id="GO:0009311">
    <property type="term" value="P:oligosaccharide metabolic process"/>
    <property type="evidence" value="ECO:0007669"/>
    <property type="project" value="InterPro"/>
</dbReference>
<dbReference type="FunFam" id="1.50.10.10:FF:000009">
    <property type="entry name" value="mannosyl-oligosaccharide glucosidase"/>
    <property type="match status" value="1"/>
</dbReference>
<dbReference type="FunFam" id="2.70.98.110:FF:000002">
    <property type="entry name" value="Mannosyl-oligosaccharide glucosidase GCS1"/>
    <property type="match status" value="1"/>
</dbReference>
<dbReference type="Gene3D" id="1.50.10.10">
    <property type="match status" value="1"/>
</dbReference>
<dbReference type="Gene3D" id="2.70.98.110">
    <property type="entry name" value="Glycosyl hydrolase family 63, N-terminal domain"/>
    <property type="match status" value="1"/>
</dbReference>
<dbReference type="InterPro" id="IPR008928">
    <property type="entry name" value="6-hairpin_glycosidase_sf"/>
</dbReference>
<dbReference type="InterPro" id="IPR012341">
    <property type="entry name" value="6hp_glycosidase-like_sf"/>
</dbReference>
<dbReference type="InterPro" id="IPR031335">
    <property type="entry name" value="Glyco_hydro_63_C"/>
</dbReference>
<dbReference type="InterPro" id="IPR031631">
    <property type="entry name" value="Glyco_hydro_63N"/>
</dbReference>
<dbReference type="InterPro" id="IPR038518">
    <property type="entry name" value="Glyco_hydro_63N_sf"/>
</dbReference>
<dbReference type="InterPro" id="IPR004888">
    <property type="entry name" value="Glycoside_hydrolase_63"/>
</dbReference>
<dbReference type="PANTHER" id="PTHR10412:SF17">
    <property type="entry name" value="ALPHA-GLUCOSIDASE 2"/>
    <property type="match status" value="1"/>
</dbReference>
<dbReference type="PANTHER" id="PTHR10412">
    <property type="entry name" value="MANNOSYL-OLIGOSACCHARIDE GLUCOSIDASE"/>
    <property type="match status" value="1"/>
</dbReference>
<dbReference type="Pfam" id="PF03200">
    <property type="entry name" value="Glyco_hydro_63"/>
    <property type="match status" value="1"/>
</dbReference>
<dbReference type="Pfam" id="PF16923">
    <property type="entry name" value="Glyco_hydro_63N"/>
    <property type="match status" value="1"/>
</dbReference>
<dbReference type="SUPFAM" id="SSF48208">
    <property type="entry name" value="Six-hairpin glycosidases"/>
    <property type="match status" value="1"/>
</dbReference>
<evidence type="ECO:0000250" key="1">
    <source>
        <dbReference type="UniProtKB" id="Q80UM7"/>
    </source>
</evidence>
<evidence type="ECO:0000256" key="2">
    <source>
        <dbReference type="SAM" id="MobiDB-lite"/>
    </source>
</evidence>
<evidence type="ECO:0000305" key="3"/>
<accession>Q84M89</accession>
<accession>O48699</accession>
<feature type="chain" id="PRO_0000420921" description="Alpha-glucosidase 2">
    <location>
        <begin position="1"/>
        <end position="789"/>
    </location>
</feature>
<feature type="region of interest" description="Disordered" evidence="2">
    <location>
        <begin position="1"/>
        <end position="24"/>
    </location>
</feature>
<feature type="region of interest" description="Disordered" evidence="2">
    <location>
        <begin position="512"/>
        <end position="531"/>
    </location>
</feature>
<feature type="active site" description="Proton donor" evidence="1">
    <location>
        <position position="523"/>
    </location>
</feature>
<feature type="active site" description="Proton acceptor" evidence="1">
    <location>
        <position position="756"/>
    </location>
</feature>
<sequence>MTGLSPSGDIKPLLDDESQRPRVITPFPSPKLTDLSMFQGEHKESLYWGTYRPQMYFGVRARTPKSLVAGLMWLVMKDGKPVMRHFCENSNDLKSFGWKEHNGRDFGRQELFEQNMVLETSFVKSEEGSLGYGGDWSIRINVQNMLNDDEVKRSTHLFFYLADEGCNGVNLGKDVLRLKESSVLASGSRQDVGNWQMHLKSQNHLETHYCGFKTPDIVNLSGLVQQNLTAQEEKSGLLQLSDSSEDSSNIYVFQISTTNQSTIDIAFVSGIKEETSNMENRIMSLTGLPLSSLLEEKHIAFNAKFNECFNLSDKLDPETLVVGKAAIGNMLGGIGYFYGQSKIHFPKSPLAKSEDDFLLYWPAELYTAVPSRPRFPRGFLWDEGFHQLLIWRWDVHITLEIVGNWLDLMNIDGWIPREQVLGAEALSKIPKQYVVQFPSNGNPPTLLLVIRDLINGIRTEKFNEADRDKILSFLDRAFVRLDAWFKWFNTSQIGKEKGSYYWHGRDNITNRELNPQSLSSGLDDYPRASHPNEDERHVDLRCWMYLAADSMNSIQEFMGKNDILVTEDYSSIAKLLSDFTLLNQMHYDKDHGAYLDFGNHTEEVRLVWKEVIHEDGHLSRELVRETYGKPELRLVPHIGYVSFFPFMFRIIPADSSILDKQLDLISNGNIVWSDYGLLSLAKTSSLYMKYNSEHQAPYWRGAIWMNMNYMILSSLHHYSTVDGPYNSKARTIYEELRSNLIRNVVRNYDQTGIIWEHYDQTKGTGEGARVFTGWSALILLIMSEEYPLF</sequence>
<protein>
    <recommendedName>
        <fullName>Alpha-glucosidase 2</fullName>
        <shortName>Glucosidase 2</shortName>
        <ecNumber>3.2.1.-</ecNumber>
    </recommendedName>
</protein>
<reference key="1">
    <citation type="journal article" date="2000" name="Nature">
        <title>Sequence and analysis of chromosome 1 of the plant Arabidopsis thaliana.</title>
        <authorList>
            <person name="Theologis A."/>
            <person name="Ecker J.R."/>
            <person name="Palm C.J."/>
            <person name="Federspiel N.A."/>
            <person name="Kaul S."/>
            <person name="White O."/>
            <person name="Alonso J."/>
            <person name="Altafi H."/>
            <person name="Araujo R."/>
            <person name="Bowman C.L."/>
            <person name="Brooks S.Y."/>
            <person name="Buehler E."/>
            <person name="Chan A."/>
            <person name="Chao Q."/>
            <person name="Chen H."/>
            <person name="Cheuk R.F."/>
            <person name="Chin C.W."/>
            <person name="Chung M.K."/>
            <person name="Conn L."/>
            <person name="Conway A.B."/>
            <person name="Conway A.R."/>
            <person name="Creasy T.H."/>
            <person name="Dewar K."/>
            <person name="Dunn P."/>
            <person name="Etgu P."/>
            <person name="Feldblyum T.V."/>
            <person name="Feng J.-D."/>
            <person name="Fong B."/>
            <person name="Fujii C.Y."/>
            <person name="Gill J.E."/>
            <person name="Goldsmith A.D."/>
            <person name="Haas B."/>
            <person name="Hansen N.F."/>
            <person name="Hughes B."/>
            <person name="Huizar L."/>
            <person name="Hunter J.L."/>
            <person name="Jenkins J."/>
            <person name="Johnson-Hopson C."/>
            <person name="Khan S."/>
            <person name="Khaykin E."/>
            <person name="Kim C.J."/>
            <person name="Koo H.L."/>
            <person name="Kremenetskaia I."/>
            <person name="Kurtz D.B."/>
            <person name="Kwan A."/>
            <person name="Lam B."/>
            <person name="Langin-Hooper S."/>
            <person name="Lee A."/>
            <person name="Lee J.M."/>
            <person name="Lenz C.A."/>
            <person name="Li J.H."/>
            <person name="Li Y.-P."/>
            <person name="Lin X."/>
            <person name="Liu S.X."/>
            <person name="Liu Z.A."/>
            <person name="Luros J.S."/>
            <person name="Maiti R."/>
            <person name="Marziali A."/>
            <person name="Militscher J."/>
            <person name="Miranda M."/>
            <person name="Nguyen M."/>
            <person name="Nierman W.C."/>
            <person name="Osborne B.I."/>
            <person name="Pai G."/>
            <person name="Peterson J."/>
            <person name="Pham P.K."/>
            <person name="Rizzo M."/>
            <person name="Rooney T."/>
            <person name="Rowley D."/>
            <person name="Sakano H."/>
            <person name="Salzberg S.L."/>
            <person name="Schwartz J.R."/>
            <person name="Shinn P."/>
            <person name="Southwick A.M."/>
            <person name="Sun H."/>
            <person name="Tallon L.J."/>
            <person name="Tambunga G."/>
            <person name="Toriumi M.J."/>
            <person name="Town C.D."/>
            <person name="Utterback T."/>
            <person name="Van Aken S."/>
            <person name="Vaysberg M."/>
            <person name="Vysotskaia V.S."/>
            <person name="Walker M."/>
            <person name="Wu D."/>
            <person name="Yu G."/>
            <person name="Fraser C.M."/>
            <person name="Venter J.C."/>
            <person name="Davis R.W."/>
        </authorList>
    </citation>
    <scope>NUCLEOTIDE SEQUENCE [LARGE SCALE GENOMIC DNA]</scope>
    <source>
        <strain>cv. Columbia</strain>
    </source>
</reference>
<reference key="2">
    <citation type="journal article" date="2017" name="Plant J.">
        <title>Araport11: a complete reannotation of the Arabidopsis thaliana reference genome.</title>
        <authorList>
            <person name="Cheng C.Y."/>
            <person name="Krishnakumar V."/>
            <person name="Chan A.P."/>
            <person name="Thibaud-Nissen F."/>
            <person name="Schobel S."/>
            <person name="Town C.D."/>
        </authorList>
    </citation>
    <scope>GENOME REANNOTATION</scope>
    <source>
        <strain>cv. Columbia</strain>
    </source>
</reference>
<reference key="3">
    <citation type="journal article" date="2003" name="Science">
        <title>Empirical analysis of transcriptional activity in the Arabidopsis genome.</title>
        <authorList>
            <person name="Yamada K."/>
            <person name="Lim J."/>
            <person name="Dale J.M."/>
            <person name="Chen H."/>
            <person name="Shinn P."/>
            <person name="Palm C.J."/>
            <person name="Southwick A.M."/>
            <person name="Wu H.C."/>
            <person name="Kim C.J."/>
            <person name="Nguyen M."/>
            <person name="Pham P.K."/>
            <person name="Cheuk R.F."/>
            <person name="Karlin-Newmann G."/>
            <person name="Liu S.X."/>
            <person name="Lam B."/>
            <person name="Sakano H."/>
            <person name="Wu T."/>
            <person name="Yu G."/>
            <person name="Miranda M."/>
            <person name="Quach H.L."/>
            <person name="Tripp M."/>
            <person name="Chang C.H."/>
            <person name="Lee J.M."/>
            <person name="Toriumi M.J."/>
            <person name="Chan M.M."/>
            <person name="Tang C.C."/>
            <person name="Onodera C.S."/>
            <person name="Deng J.M."/>
            <person name="Akiyama K."/>
            <person name="Ansari Y."/>
            <person name="Arakawa T."/>
            <person name="Banh J."/>
            <person name="Banno F."/>
            <person name="Bowser L."/>
            <person name="Brooks S.Y."/>
            <person name="Carninci P."/>
            <person name="Chao Q."/>
            <person name="Choy N."/>
            <person name="Enju A."/>
            <person name="Goldsmith A.D."/>
            <person name="Gurjal M."/>
            <person name="Hansen N.F."/>
            <person name="Hayashizaki Y."/>
            <person name="Johnson-Hopson C."/>
            <person name="Hsuan V.W."/>
            <person name="Iida K."/>
            <person name="Karnes M."/>
            <person name="Khan S."/>
            <person name="Koesema E."/>
            <person name="Ishida J."/>
            <person name="Jiang P.X."/>
            <person name="Jones T."/>
            <person name="Kawai J."/>
            <person name="Kamiya A."/>
            <person name="Meyers C."/>
            <person name="Nakajima M."/>
            <person name="Narusaka M."/>
            <person name="Seki M."/>
            <person name="Sakurai T."/>
            <person name="Satou M."/>
            <person name="Tamse R."/>
            <person name="Vaysberg M."/>
            <person name="Wallender E.K."/>
            <person name="Wong C."/>
            <person name="Yamamura Y."/>
            <person name="Yuan S."/>
            <person name="Shinozaki K."/>
            <person name="Davis R.W."/>
            <person name="Theologis A."/>
            <person name="Ecker J.R."/>
        </authorList>
    </citation>
    <scope>NUCLEOTIDE SEQUENCE [LARGE SCALE MRNA]</scope>
    <source>
        <strain>cv. Columbia</strain>
    </source>
</reference>
<reference key="4">
    <citation type="submission" date="2006-07" db="EMBL/GenBank/DDBJ databases">
        <title>Large-scale analysis of RIKEN Arabidopsis full-length (RAFL) cDNAs.</title>
        <authorList>
            <person name="Totoki Y."/>
            <person name="Seki M."/>
            <person name="Ishida J."/>
            <person name="Nakajima M."/>
            <person name="Enju A."/>
            <person name="Kamiya A."/>
            <person name="Narusaka M."/>
            <person name="Shin-i T."/>
            <person name="Nakagawa M."/>
            <person name="Sakamoto N."/>
            <person name="Oishi K."/>
            <person name="Kohara Y."/>
            <person name="Kobayashi M."/>
            <person name="Toyoda A."/>
            <person name="Sakaki Y."/>
            <person name="Sakurai T."/>
            <person name="Iida K."/>
            <person name="Akiyama K."/>
            <person name="Satou M."/>
            <person name="Toyoda T."/>
            <person name="Konagaya A."/>
            <person name="Carninci P."/>
            <person name="Kawai J."/>
            <person name="Hayashizaki Y."/>
            <person name="Shinozaki K."/>
        </authorList>
    </citation>
    <scope>NUCLEOTIDE SEQUENCE [LARGE SCALE MRNA]</scope>
    <source>
        <strain>cv. Columbia</strain>
    </source>
</reference>